<name>Y1074_CAUVC</name>
<keyword id="KW-1185">Reference proteome</keyword>
<protein>
    <recommendedName>
        <fullName>Uncharacterized protein CC_1074</fullName>
    </recommendedName>
</protein>
<feature type="chain" id="PRO_0000197430" description="Uncharacterized protein CC_1074">
    <location>
        <begin position="1"/>
        <end position="100"/>
    </location>
</feature>
<proteinExistence type="predicted"/>
<dbReference type="EMBL" id="U13663">
    <property type="protein sequence ID" value="AAA66205.1"/>
    <property type="molecule type" value="Genomic_DNA"/>
</dbReference>
<dbReference type="EMBL" id="AE005673">
    <property type="protein sequence ID" value="AAK23058.1"/>
    <property type="molecule type" value="Genomic_DNA"/>
</dbReference>
<dbReference type="PIR" id="I40669">
    <property type="entry name" value="I40669"/>
</dbReference>
<dbReference type="RefSeq" id="NP_419890.1">
    <property type="nucleotide sequence ID" value="NC_002696.2"/>
</dbReference>
<dbReference type="RefSeq" id="WP_010918958.1">
    <property type="nucleotide sequence ID" value="NC_002696.2"/>
</dbReference>
<dbReference type="STRING" id="190650.CC_1074"/>
<dbReference type="EnsemblBacteria" id="AAK23058">
    <property type="protein sequence ID" value="AAK23058"/>
    <property type="gene ID" value="CC_1074"/>
</dbReference>
<dbReference type="KEGG" id="ccr:CC_1074"/>
<dbReference type="PATRIC" id="fig|190650.5.peg.1092"/>
<dbReference type="HOGENOM" id="CLU_2300729_0_0_5"/>
<dbReference type="BioCyc" id="CAULO:CC1074-MONOMER"/>
<dbReference type="Proteomes" id="UP000001816">
    <property type="component" value="Chromosome"/>
</dbReference>
<accession>Q45973</accession>
<organism>
    <name type="scientific">Caulobacter vibrioides (strain ATCC 19089 / CIP 103742 / CB 15)</name>
    <name type="common">Caulobacter crescentus</name>
    <dbReference type="NCBI Taxonomy" id="190650"/>
    <lineage>
        <taxon>Bacteria</taxon>
        <taxon>Pseudomonadati</taxon>
        <taxon>Pseudomonadota</taxon>
        <taxon>Alphaproteobacteria</taxon>
        <taxon>Caulobacterales</taxon>
        <taxon>Caulobacteraceae</taxon>
        <taxon>Caulobacter</taxon>
    </lineage>
</organism>
<reference key="1">
    <citation type="journal article" date="1995" name="J. Bacteriol.">
        <title>Caulobacter FliQ and FliR membrane proteins, required for flagellar biogenesis and cell division, belong to a family of virulence factor export proteins.</title>
        <authorList>
            <person name="Zhuang W.Y."/>
            <person name="Shapiro L."/>
        </authorList>
    </citation>
    <scope>NUCLEOTIDE SEQUENCE [GENOMIC DNA]</scope>
    <source>
        <strain>ATCC 19089 / CIP 103742 / CB 15</strain>
    </source>
</reference>
<reference key="2">
    <citation type="journal article" date="2001" name="Proc. Natl. Acad. Sci. U.S.A.">
        <title>Complete genome sequence of Caulobacter crescentus.</title>
        <authorList>
            <person name="Nierman W.C."/>
            <person name="Feldblyum T.V."/>
            <person name="Laub M.T."/>
            <person name="Paulsen I.T."/>
            <person name="Nelson K.E."/>
            <person name="Eisen J.A."/>
            <person name="Heidelberg J.F."/>
            <person name="Alley M.R.K."/>
            <person name="Ohta N."/>
            <person name="Maddock J.R."/>
            <person name="Potocka I."/>
            <person name="Nelson W.C."/>
            <person name="Newton A."/>
            <person name="Stephens C."/>
            <person name="Phadke N.D."/>
            <person name="Ely B."/>
            <person name="DeBoy R.T."/>
            <person name="Dodson R.J."/>
            <person name="Durkin A.S."/>
            <person name="Gwinn M.L."/>
            <person name="Haft D.H."/>
            <person name="Kolonay J.F."/>
            <person name="Smit J."/>
            <person name="Craven M.B."/>
            <person name="Khouri H.M."/>
            <person name="Shetty J."/>
            <person name="Berry K.J."/>
            <person name="Utterback T.R."/>
            <person name="Tran K."/>
            <person name="Wolf A.M."/>
            <person name="Vamathevan J.J."/>
            <person name="Ermolaeva M.D."/>
            <person name="White O."/>
            <person name="Salzberg S.L."/>
            <person name="Venter J.C."/>
            <person name="Shapiro L."/>
            <person name="Fraser C.M."/>
        </authorList>
    </citation>
    <scope>NUCLEOTIDE SEQUENCE [LARGE SCALE GENOMIC DNA]</scope>
    <source>
        <strain>ATCC 19089 / CIP 103742 / CB 15</strain>
    </source>
</reference>
<gene>
    <name type="ordered locus">CC_1074</name>
</gene>
<sequence>MIASLALAAAVFAAAPQAQAQTDLLKPVSEPRIAVAILNCLVKNDGYLTACTVQDESPNDLGVGQAALSMVSQVQVDLLGPDGKSRAGSYIQVPVRIRIR</sequence>